<keyword id="KW-0119">Carbohydrate metabolism</keyword>
<keyword id="KW-0313">Glucose metabolism</keyword>
<keyword id="KW-0378">Hydrolase</keyword>
<sequence>MKQVVYIANSESKNIEVWNLCKSGKMNLIQKIETDGKIQPINIIQKRNLLYAGIFPDNKIITYSINHNGFLEKKNESNIPGKANYISFDKKKEFLFCSSYHSNFISVSPLNKFGIPQNPIQIIYNIEGCHAAKMNYKYNILFVISLKEDCIYLYYLTDFGILKSTEQNILHTQKKSGPRHIIFHPNQDFIYTINELNGTIDVWKIYKKNNVIKVKNIQNIHVLKNRFLKDYWCSDIHITSCGRFLYACDRFFNIISLFHINQNDNKLVFFKSYDTEEQPRSFNINSHNTHLIVAGEKSNTFIIYGISNSTGELKKINVYSTGQRPVWILIHALC</sequence>
<feature type="chain" id="PRO_1000185834" description="6-phosphogluconolactonase">
    <location>
        <begin position="1"/>
        <end position="334"/>
    </location>
</feature>
<accession>B8D7I7</accession>
<protein>
    <recommendedName>
        <fullName evidence="1">6-phosphogluconolactonase</fullName>
        <shortName evidence="1">6-P-gluconolactonase</shortName>
        <ecNumber evidence="1">3.1.1.31</ecNumber>
    </recommendedName>
</protein>
<reference key="1">
    <citation type="journal article" date="2009" name="Science">
        <title>The dynamics and time scale of ongoing genomic erosion in symbiotic bacteria.</title>
        <authorList>
            <person name="Moran N.A."/>
            <person name="McLaughlin H.J."/>
            <person name="Sorek R."/>
        </authorList>
    </citation>
    <scope>NUCLEOTIDE SEQUENCE [LARGE SCALE GENOMIC DNA]</scope>
    <source>
        <strain>Tuc7</strain>
    </source>
</reference>
<dbReference type="EC" id="3.1.1.31" evidence="1"/>
<dbReference type="EMBL" id="CP001158">
    <property type="protein sequence ID" value="ACL30102.1"/>
    <property type="molecule type" value="Genomic_DNA"/>
</dbReference>
<dbReference type="RefSeq" id="WP_012619495.1">
    <property type="nucleotide sequence ID" value="NC_011834.1"/>
</dbReference>
<dbReference type="SMR" id="B8D7I7"/>
<dbReference type="KEGG" id="bau:BUAPTUC7_289"/>
<dbReference type="HOGENOM" id="CLU_038716_2_0_6"/>
<dbReference type="UniPathway" id="UPA00115">
    <property type="reaction ID" value="UER00409"/>
</dbReference>
<dbReference type="GO" id="GO:0005829">
    <property type="term" value="C:cytosol"/>
    <property type="evidence" value="ECO:0007669"/>
    <property type="project" value="TreeGrafter"/>
</dbReference>
<dbReference type="GO" id="GO:0017057">
    <property type="term" value="F:6-phosphogluconolactonase activity"/>
    <property type="evidence" value="ECO:0007669"/>
    <property type="project" value="UniProtKB-UniRule"/>
</dbReference>
<dbReference type="GO" id="GO:0006006">
    <property type="term" value="P:glucose metabolic process"/>
    <property type="evidence" value="ECO:0007669"/>
    <property type="project" value="UniProtKB-KW"/>
</dbReference>
<dbReference type="GO" id="GO:0009051">
    <property type="term" value="P:pentose-phosphate shunt, oxidative branch"/>
    <property type="evidence" value="ECO:0007669"/>
    <property type="project" value="UniProtKB-UniRule"/>
</dbReference>
<dbReference type="Gene3D" id="2.130.10.10">
    <property type="entry name" value="YVTN repeat-like/Quinoprotein amine dehydrogenase"/>
    <property type="match status" value="1"/>
</dbReference>
<dbReference type="HAMAP" id="MF_01605">
    <property type="entry name" value="6P_gluconolactonase"/>
    <property type="match status" value="1"/>
</dbReference>
<dbReference type="InterPro" id="IPR022528">
    <property type="entry name" value="6-phosphogluconolactonase_YbhE"/>
</dbReference>
<dbReference type="InterPro" id="IPR050282">
    <property type="entry name" value="Cycloisomerase_2"/>
</dbReference>
<dbReference type="InterPro" id="IPR019405">
    <property type="entry name" value="Lactonase_7-beta_prop"/>
</dbReference>
<dbReference type="InterPro" id="IPR015943">
    <property type="entry name" value="WD40/YVTN_repeat-like_dom_sf"/>
</dbReference>
<dbReference type="NCBIfam" id="NF008258">
    <property type="entry name" value="PRK11028.1"/>
    <property type="match status" value="1"/>
</dbReference>
<dbReference type="PANTHER" id="PTHR30344:SF1">
    <property type="entry name" value="6-PHOSPHOGLUCONOLACTONASE"/>
    <property type="match status" value="1"/>
</dbReference>
<dbReference type="PANTHER" id="PTHR30344">
    <property type="entry name" value="6-PHOSPHOGLUCONOLACTONASE-RELATED"/>
    <property type="match status" value="1"/>
</dbReference>
<dbReference type="Pfam" id="PF10282">
    <property type="entry name" value="Lactonase"/>
    <property type="match status" value="1"/>
</dbReference>
<dbReference type="SUPFAM" id="SSF101908">
    <property type="entry name" value="Putative isomerase YbhE"/>
    <property type="match status" value="1"/>
</dbReference>
<evidence type="ECO:0000255" key="1">
    <source>
        <dbReference type="HAMAP-Rule" id="MF_01605"/>
    </source>
</evidence>
<organism>
    <name type="scientific">Buchnera aphidicola subsp. Acyrthosiphon pisum (strain Tuc7)</name>
    <dbReference type="NCBI Taxonomy" id="561501"/>
    <lineage>
        <taxon>Bacteria</taxon>
        <taxon>Pseudomonadati</taxon>
        <taxon>Pseudomonadota</taxon>
        <taxon>Gammaproteobacteria</taxon>
        <taxon>Enterobacterales</taxon>
        <taxon>Erwiniaceae</taxon>
        <taxon>Buchnera</taxon>
    </lineage>
</organism>
<name>6PGL_BUCAT</name>
<comment type="function">
    <text evidence="1">Catalyzes the hydrolysis of 6-phosphogluconolactone to 6-phosphogluconate.</text>
</comment>
<comment type="catalytic activity">
    <reaction evidence="1">
        <text>6-phospho-D-glucono-1,5-lactone + H2O = 6-phospho-D-gluconate + H(+)</text>
        <dbReference type="Rhea" id="RHEA:12556"/>
        <dbReference type="ChEBI" id="CHEBI:15377"/>
        <dbReference type="ChEBI" id="CHEBI:15378"/>
        <dbReference type="ChEBI" id="CHEBI:57955"/>
        <dbReference type="ChEBI" id="CHEBI:58759"/>
        <dbReference type="EC" id="3.1.1.31"/>
    </reaction>
</comment>
<comment type="pathway">
    <text evidence="1">Carbohydrate degradation; pentose phosphate pathway; D-ribulose 5-phosphate from D-glucose 6-phosphate (oxidative stage): step 2/3.</text>
</comment>
<comment type="similarity">
    <text evidence="1">Belongs to the cycloisomerase 2 family.</text>
</comment>
<proteinExistence type="inferred from homology"/>
<gene>
    <name evidence="1" type="primary">pgl</name>
    <name type="ordered locus">BUAPTUC7_289</name>
</gene>